<organism>
    <name type="scientific">Cereibacter sphaeroides (strain ATCC 17023 / DSM 158 / JCM 6121 / CCUG 31486 / LMG 2827 / NBRC 12203 / NCIMB 8253 / ATH 2.4.1.)</name>
    <name type="common">Rhodobacter sphaeroides</name>
    <dbReference type="NCBI Taxonomy" id="272943"/>
    <lineage>
        <taxon>Bacteria</taxon>
        <taxon>Pseudomonadati</taxon>
        <taxon>Pseudomonadota</taxon>
        <taxon>Alphaproteobacteria</taxon>
        <taxon>Rhodobacterales</taxon>
        <taxon>Paracoccaceae</taxon>
        <taxon>Cereibacter</taxon>
    </lineage>
</organism>
<gene>
    <name evidence="1" type="primary">acpP</name>
    <name type="ordered locus">RHOS4_10540</name>
    <name type="ORF">RSP_2463</name>
</gene>
<reference key="1">
    <citation type="submission" date="2005-09" db="EMBL/GenBank/DDBJ databases">
        <title>Complete sequence of chromosome 1 of Rhodobacter sphaeroides 2.4.1.</title>
        <authorList>
            <person name="Copeland A."/>
            <person name="Lucas S."/>
            <person name="Lapidus A."/>
            <person name="Barry K."/>
            <person name="Detter J.C."/>
            <person name="Glavina T."/>
            <person name="Hammon N."/>
            <person name="Israni S."/>
            <person name="Pitluck S."/>
            <person name="Richardson P."/>
            <person name="Mackenzie C."/>
            <person name="Choudhary M."/>
            <person name="Larimer F."/>
            <person name="Hauser L.J."/>
            <person name="Land M."/>
            <person name="Donohue T.J."/>
            <person name="Kaplan S."/>
        </authorList>
    </citation>
    <scope>NUCLEOTIDE SEQUENCE [LARGE SCALE GENOMIC DNA]</scope>
    <source>
        <strain>ATCC 17023 / DSM 158 / JCM 6121 / CCUG 31486 / LMG 2827 / NBRC 12203 / NCIMB 8253 / ATH 2.4.1.</strain>
    </source>
</reference>
<feature type="chain" id="PRO_1000066678" description="Acyl carrier protein">
    <location>
        <begin position="1"/>
        <end position="77"/>
    </location>
</feature>
<feature type="domain" description="Carrier" evidence="2">
    <location>
        <begin position="2"/>
        <end position="77"/>
    </location>
</feature>
<feature type="modified residue" description="O-(pantetheine 4'-phosphoryl)serine" evidence="2">
    <location>
        <position position="37"/>
    </location>
</feature>
<keyword id="KW-0963">Cytoplasm</keyword>
<keyword id="KW-0275">Fatty acid biosynthesis</keyword>
<keyword id="KW-0276">Fatty acid metabolism</keyword>
<keyword id="KW-0444">Lipid biosynthesis</keyword>
<keyword id="KW-0443">Lipid metabolism</keyword>
<keyword id="KW-0596">Phosphopantetheine</keyword>
<keyword id="KW-0597">Phosphoprotein</keyword>
<keyword id="KW-1185">Reference proteome</keyword>
<dbReference type="EMBL" id="CP000143">
    <property type="protein sequence ID" value="ABA78622.1"/>
    <property type="molecule type" value="Genomic_DNA"/>
</dbReference>
<dbReference type="RefSeq" id="WP_002719616.1">
    <property type="nucleotide sequence ID" value="NZ_CP030271.1"/>
</dbReference>
<dbReference type="RefSeq" id="YP_352523.1">
    <property type="nucleotide sequence ID" value="NC_007493.2"/>
</dbReference>
<dbReference type="SMR" id="Q3J3L2"/>
<dbReference type="STRING" id="272943.RSP_2463"/>
<dbReference type="EnsemblBacteria" id="ABA78622">
    <property type="protein sequence ID" value="ABA78622"/>
    <property type="gene ID" value="RSP_2463"/>
</dbReference>
<dbReference type="KEGG" id="rsp:RSP_2463"/>
<dbReference type="PATRIC" id="fig|272943.9.peg.1380"/>
<dbReference type="eggNOG" id="COG0236">
    <property type="taxonomic scope" value="Bacteria"/>
</dbReference>
<dbReference type="OrthoDB" id="9804551at2"/>
<dbReference type="PhylomeDB" id="Q3J3L2"/>
<dbReference type="UniPathway" id="UPA00094"/>
<dbReference type="Proteomes" id="UP000002703">
    <property type="component" value="Chromosome 1"/>
</dbReference>
<dbReference type="GO" id="GO:0005829">
    <property type="term" value="C:cytosol"/>
    <property type="evidence" value="ECO:0007669"/>
    <property type="project" value="TreeGrafter"/>
</dbReference>
<dbReference type="GO" id="GO:0016020">
    <property type="term" value="C:membrane"/>
    <property type="evidence" value="ECO:0007669"/>
    <property type="project" value="GOC"/>
</dbReference>
<dbReference type="GO" id="GO:0000035">
    <property type="term" value="F:acyl binding"/>
    <property type="evidence" value="ECO:0007669"/>
    <property type="project" value="TreeGrafter"/>
</dbReference>
<dbReference type="GO" id="GO:0000036">
    <property type="term" value="F:acyl carrier activity"/>
    <property type="evidence" value="ECO:0007669"/>
    <property type="project" value="UniProtKB-UniRule"/>
</dbReference>
<dbReference type="GO" id="GO:0009245">
    <property type="term" value="P:lipid A biosynthetic process"/>
    <property type="evidence" value="ECO:0007669"/>
    <property type="project" value="TreeGrafter"/>
</dbReference>
<dbReference type="FunFam" id="1.10.1200.10:FF:000001">
    <property type="entry name" value="Acyl carrier protein"/>
    <property type="match status" value="1"/>
</dbReference>
<dbReference type="Gene3D" id="1.10.1200.10">
    <property type="entry name" value="ACP-like"/>
    <property type="match status" value="1"/>
</dbReference>
<dbReference type="HAMAP" id="MF_01217">
    <property type="entry name" value="Acyl_carrier"/>
    <property type="match status" value="1"/>
</dbReference>
<dbReference type="InterPro" id="IPR003231">
    <property type="entry name" value="ACP"/>
</dbReference>
<dbReference type="InterPro" id="IPR036736">
    <property type="entry name" value="ACP-like_sf"/>
</dbReference>
<dbReference type="InterPro" id="IPR009081">
    <property type="entry name" value="PP-bd_ACP"/>
</dbReference>
<dbReference type="InterPro" id="IPR006162">
    <property type="entry name" value="Ppantetheine_attach_site"/>
</dbReference>
<dbReference type="NCBIfam" id="TIGR00517">
    <property type="entry name" value="acyl_carrier"/>
    <property type="match status" value="1"/>
</dbReference>
<dbReference type="NCBIfam" id="NF002148">
    <property type="entry name" value="PRK00982.1-2"/>
    <property type="match status" value="1"/>
</dbReference>
<dbReference type="NCBIfam" id="NF002149">
    <property type="entry name" value="PRK00982.1-3"/>
    <property type="match status" value="1"/>
</dbReference>
<dbReference type="NCBIfam" id="NF002150">
    <property type="entry name" value="PRK00982.1-4"/>
    <property type="match status" value="1"/>
</dbReference>
<dbReference type="NCBIfam" id="NF002151">
    <property type="entry name" value="PRK00982.1-5"/>
    <property type="match status" value="1"/>
</dbReference>
<dbReference type="PANTHER" id="PTHR20863">
    <property type="entry name" value="ACYL CARRIER PROTEIN"/>
    <property type="match status" value="1"/>
</dbReference>
<dbReference type="PANTHER" id="PTHR20863:SF76">
    <property type="entry name" value="CARRIER DOMAIN-CONTAINING PROTEIN"/>
    <property type="match status" value="1"/>
</dbReference>
<dbReference type="Pfam" id="PF00550">
    <property type="entry name" value="PP-binding"/>
    <property type="match status" value="1"/>
</dbReference>
<dbReference type="SUPFAM" id="SSF47336">
    <property type="entry name" value="ACP-like"/>
    <property type="match status" value="1"/>
</dbReference>
<dbReference type="PROSITE" id="PS50075">
    <property type="entry name" value="CARRIER"/>
    <property type="match status" value="1"/>
</dbReference>
<dbReference type="PROSITE" id="PS00012">
    <property type="entry name" value="PHOSPHOPANTETHEINE"/>
    <property type="match status" value="1"/>
</dbReference>
<sequence>MSDIADRVKKIVVEHLGVEEEKVTENASFIDDLGADSLDTVELVMAFEEEFGIEIPDDAAETIQTFGDAVKFISEAA</sequence>
<name>ACP_CERS4</name>
<proteinExistence type="inferred from homology"/>
<comment type="function">
    <text evidence="1">Carrier of the growing fatty acid chain in fatty acid biosynthesis.</text>
</comment>
<comment type="pathway">
    <text evidence="1">Lipid metabolism; fatty acid biosynthesis.</text>
</comment>
<comment type="subcellular location">
    <subcellularLocation>
        <location evidence="1">Cytoplasm</location>
    </subcellularLocation>
</comment>
<comment type="PTM">
    <text evidence="1">4'-phosphopantetheine is transferred from CoA to a specific serine of apo-ACP by AcpS. This modification is essential for activity because fatty acids are bound in thioester linkage to the sulfhydryl of the prosthetic group.</text>
</comment>
<comment type="similarity">
    <text evidence="1">Belongs to the acyl carrier protein (ACP) family.</text>
</comment>
<accession>Q3J3L2</accession>
<evidence type="ECO:0000255" key="1">
    <source>
        <dbReference type="HAMAP-Rule" id="MF_01217"/>
    </source>
</evidence>
<evidence type="ECO:0000255" key="2">
    <source>
        <dbReference type="PROSITE-ProRule" id="PRU00258"/>
    </source>
</evidence>
<protein>
    <recommendedName>
        <fullName evidence="1">Acyl carrier protein</fullName>
        <shortName evidence="1">ACP</shortName>
    </recommendedName>
</protein>